<protein>
    <recommendedName>
        <fullName evidence="1">Methylthioribose-1-phosphate isomerase 2</fullName>
        <shortName evidence="1">M1Pi 2</shortName>
        <shortName evidence="1">MTR-1-P isomerase 2</shortName>
        <ecNumber evidence="1">5.3.1.23</ecNumber>
    </recommendedName>
    <alternativeName>
        <fullName evidence="1">S-methyl-5-thioribose-1-phosphate isomerase 2</fullName>
    </alternativeName>
    <alternativeName>
        <fullName evidence="1">Translation initiation factor eIF-2B subunit alpha/beta/delta-like protein 2</fullName>
    </alternativeName>
</protein>
<accession>Q4D6B2</accession>
<proteinExistence type="inferred from homology"/>
<reference key="1">
    <citation type="journal article" date="2005" name="Science">
        <title>The genome sequence of Trypanosoma cruzi, etiologic agent of Chagas disease.</title>
        <authorList>
            <person name="El-Sayed N.M.A."/>
            <person name="Myler P.J."/>
            <person name="Bartholomeu D.C."/>
            <person name="Nilsson D."/>
            <person name="Aggarwal G."/>
            <person name="Tran A.-N."/>
            <person name="Ghedin E."/>
            <person name="Worthey E.A."/>
            <person name="Delcher A.L."/>
            <person name="Blandin G."/>
            <person name="Westenberger S.J."/>
            <person name="Caler E."/>
            <person name="Cerqueira G.C."/>
            <person name="Branche C."/>
            <person name="Haas B."/>
            <person name="Anupama A."/>
            <person name="Arner E."/>
            <person name="Aslund L."/>
            <person name="Attipoe P."/>
            <person name="Bontempi E."/>
            <person name="Bringaud F."/>
            <person name="Burton P."/>
            <person name="Cadag E."/>
            <person name="Campbell D.A."/>
            <person name="Carrington M."/>
            <person name="Crabtree J."/>
            <person name="Darban H."/>
            <person name="da Silveira J.F."/>
            <person name="de Jong P."/>
            <person name="Edwards K."/>
            <person name="Englund P.T."/>
            <person name="Fazelina G."/>
            <person name="Feldblyum T."/>
            <person name="Ferella M."/>
            <person name="Frasch A.C."/>
            <person name="Gull K."/>
            <person name="Horn D."/>
            <person name="Hou L."/>
            <person name="Huang Y."/>
            <person name="Kindlund E."/>
            <person name="Klingbeil M."/>
            <person name="Kluge S."/>
            <person name="Koo H."/>
            <person name="Lacerda D."/>
            <person name="Levin M.J."/>
            <person name="Lorenzi H."/>
            <person name="Louie T."/>
            <person name="Machado C.R."/>
            <person name="McCulloch R."/>
            <person name="McKenna A."/>
            <person name="Mizuno Y."/>
            <person name="Mottram J.C."/>
            <person name="Nelson S."/>
            <person name="Ochaya S."/>
            <person name="Osoegawa K."/>
            <person name="Pai G."/>
            <person name="Parsons M."/>
            <person name="Pentony M."/>
            <person name="Pettersson U."/>
            <person name="Pop M."/>
            <person name="Ramirez J.L."/>
            <person name="Rinta J."/>
            <person name="Robertson L."/>
            <person name="Salzberg S.L."/>
            <person name="Sanchez D.O."/>
            <person name="Seyler A."/>
            <person name="Sharma R."/>
            <person name="Shetty J."/>
            <person name="Simpson A.J."/>
            <person name="Sisk E."/>
            <person name="Tammi M.T."/>
            <person name="Tarleton R."/>
            <person name="Teixeira S."/>
            <person name="Van Aken S."/>
            <person name="Vogt C."/>
            <person name="Ward P.N."/>
            <person name="Wickstead B."/>
            <person name="Wortman J."/>
            <person name="White O."/>
            <person name="Fraser C.M."/>
            <person name="Stuart K.D."/>
            <person name="Andersson B."/>
        </authorList>
    </citation>
    <scope>NUCLEOTIDE SEQUENCE [LARGE SCALE GENOMIC DNA]</scope>
    <source>
        <strain>CL Brener</strain>
    </source>
</reference>
<gene>
    <name type="ORF">Tc00.1047053508269.30</name>
</gene>
<dbReference type="EC" id="5.3.1.23" evidence="1"/>
<dbReference type="EMBL" id="AAHK01000940">
    <property type="protein sequence ID" value="EAN88062.1"/>
    <property type="molecule type" value="Genomic_DNA"/>
</dbReference>
<dbReference type="RefSeq" id="XP_809913.1">
    <property type="nucleotide sequence ID" value="XM_804820.1"/>
</dbReference>
<dbReference type="SMR" id="Q4D6B2"/>
<dbReference type="FunCoup" id="Q4D6B2">
    <property type="interactions" value="306"/>
</dbReference>
<dbReference type="STRING" id="353153.Q4D6B2"/>
<dbReference type="PaxDb" id="353153-Q4D6B2"/>
<dbReference type="EnsemblProtists" id="EAN88062">
    <property type="protein sequence ID" value="EAN88062"/>
    <property type="gene ID" value="Tc00.1047053508269.30"/>
</dbReference>
<dbReference type="GeneID" id="3540589"/>
<dbReference type="KEGG" id="tcr:508269.30"/>
<dbReference type="eggNOG" id="KOG1468">
    <property type="taxonomic scope" value="Eukaryota"/>
</dbReference>
<dbReference type="InParanoid" id="Q4D6B2"/>
<dbReference type="OMA" id="CETRPLN"/>
<dbReference type="UniPathway" id="UPA00904">
    <property type="reaction ID" value="UER00874"/>
</dbReference>
<dbReference type="Proteomes" id="UP000002296">
    <property type="component" value="Unassembled WGS sequence"/>
</dbReference>
<dbReference type="GO" id="GO:0005737">
    <property type="term" value="C:cytoplasm"/>
    <property type="evidence" value="ECO:0007669"/>
    <property type="project" value="UniProtKB-SubCell"/>
</dbReference>
<dbReference type="GO" id="GO:0005634">
    <property type="term" value="C:nucleus"/>
    <property type="evidence" value="ECO:0007669"/>
    <property type="project" value="UniProtKB-SubCell"/>
</dbReference>
<dbReference type="GO" id="GO:0046523">
    <property type="term" value="F:S-methyl-5-thioribose-1-phosphate isomerase activity"/>
    <property type="evidence" value="ECO:0007669"/>
    <property type="project" value="UniProtKB-UniRule"/>
</dbReference>
<dbReference type="GO" id="GO:0019509">
    <property type="term" value="P:L-methionine salvage from methylthioadenosine"/>
    <property type="evidence" value="ECO:0007669"/>
    <property type="project" value="UniProtKB-UniRule"/>
</dbReference>
<dbReference type="FunFam" id="1.20.120.420:FF:000003">
    <property type="entry name" value="Methylthioribose-1-phosphate isomerase"/>
    <property type="match status" value="1"/>
</dbReference>
<dbReference type="FunFam" id="3.40.50.10470:FF:000006">
    <property type="entry name" value="Methylthioribose-1-phosphate isomerase"/>
    <property type="match status" value="1"/>
</dbReference>
<dbReference type="Gene3D" id="1.20.120.420">
    <property type="entry name" value="translation initiation factor eif-2b, domain 1"/>
    <property type="match status" value="1"/>
</dbReference>
<dbReference type="Gene3D" id="3.40.50.10470">
    <property type="entry name" value="Translation initiation factor eif-2b, domain 2"/>
    <property type="match status" value="1"/>
</dbReference>
<dbReference type="HAMAP" id="MF_01678">
    <property type="entry name" value="Salvage_MtnA"/>
    <property type="match status" value="1"/>
</dbReference>
<dbReference type="InterPro" id="IPR000649">
    <property type="entry name" value="IF-2B-related"/>
</dbReference>
<dbReference type="InterPro" id="IPR005251">
    <property type="entry name" value="IF-M1Pi"/>
</dbReference>
<dbReference type="InterPro" id="IPR042529">
    <property type="entry name" value="IF_2B-like_C"/>
</dbReference>
<dbReference type="InterPro" id="IPR011559">
    <property type="entry name" value="Initiation_fac_2B_a/b/d"/>
</dbReference>
<dbReference type="InterPro" id="IPR027363">
    <property type="entry name" value="M1Pi_N"/>
</dbReference>
<dbReference type="InterPro" id="IPR037171">
    <property type="entry name" value="NagB/RpiA_transferase-like"/>
</dbReference>
<dbReference type="NCBIfam" id="TIGR00524">
    <property type="entry name" value="eIF-2B_rel"/>
    <property type="match status" value="1"/>
</dbReference>
<dbReference type="NCBIfam" id="NF004326">
    <property type="entry name" value="PRK05720.1"/>
    <property type="match status" value="1"/>
</dbReference>
<dbReference type="NCBIfam" id="TIGR00512">
    <property type="entry name" value="salvage_mtnA"/>
    <property type="match status" value="1"/>
</dbReference>
<dbReference type="PANTHER" id="PTHR43475">
    <property type="entry name" value="METHYLTHIORIBOSE-1-PHOSPHATE ISOMERASE"/>
    <property type="match status" value="1"/>
</dbReference>
<dbReference type="PANTHER" id="PTHR43475:SF1">
    <property type="entry name" value="METHYLTHIORIBOSE-1-PHOSPHATE ISOMERASE"/>
    <property type="match status" value="1"/>
</dbReference>
<dbReference type="Pfam" id="PF01008">
    <property type="entry name" value="IF-2B"/>
    <property type="match status" value="1"/>
</dbReference>
<dbReference type="SUPFAM" id="SSF100950">
    <property type="entry name" value="NagB/RpiA/CoA transferase-like"/>
    <property type="match status" value="1"/>
</dbReference>
<feature type="chain" id="PRO_0000402005" description="Methylthioribose-1-phosphate isomerase 2">
    <location>
        <begin position="1"/>
        <end position="372"/>
    </location>
</feature>
<feature type="active site" description="Proton donor" evidence="1">
    <location>
        <position position="254"/>
    </location>
</feature>
<feature type="site" description="Transition state stabilizer" evidence="1">
    <location>
        <position position="174"/>
    </location>
</feature>
<name>MTNA2_TRYCC</name>
<comment type="function">
    <text evidence="1">Catalyzes the interconversion of methylthioribose-1-phosphate (MTR-1-P) into methylthioribulose-1-phosphate (MTRu-1-P).</text>
</comment>
<comment type="catalytic activity">
    <reaction evidence="1">
        <text>5-(methylsulfanyl)-alpha-D-ribose 1-phosphate = 5-(methylsulfanyl)-D-ribulose 1-phosphate</text>
        <dbReference type="Rhea" id="RHEA:19989"/>
        <dbReference type="ChEBI" id="CHEBI:58533"/>
        <dbReference type="ChEBI" id="CHEBI:58548"/>
        <dbReference type="EC" id="5.3.1.23"/>
    </reaction>
</comment>
<comment type="pathway">
    <text evidence="1">Amino-acid biosynthesis; L-methionine biosynthesis via salvage pathway; L-methionine from S-methyl-5-thio-alpha-D-ribose 1-phosphate: step 1/6.</text>
</comment>
<comment type="subcellular location">
    <subcellularLocation>
        <location evidence="1">Cytoplasm</location>
    </subcellularLocation>
    <subcellularLocation>
        <location evidence="1">Nucleus</location>
    </subcellularLocation>
</comment>
<comment type="similarity">
    <text evidence="1">Belongs to the eIF-2B alpha/beta/delta subunits family. MtnA subfamily.</text>
</comment>
<sequence length="372" mass="39795">MARAHNATLESIQYARGTLRLLDQRKLPLETVFDEILTVDDIWTAIKEMRVRGAPAIAVSAALAIAVAAGNELKKKDGACNSVDGTRRFLLESCDTVMTARPTAVNLSKTLIQLKRDIADVTANTAGGLVEACAVLAEKIYAEDVACNEGIMRHGAAHLTQLVKKSKVSVLTICNTGALATSRYGTALGVVRQLFYEGKLEQVYACETRPWNQGARLTVYECVQENIPCTLICDSAVSALMGSRPIDAVIVGADRICRNGDTANKIGTCNLAVAAAHYGVPFFVAAPSTTLDPMTADGESVVIEERETMELTHSMATQQRVVAEGPSLRIWNPVFDITPAALVTGGIITERGVLQPSATAPFFDITRIVSAS</sequence>
<organism>
    <name type="scientific">Trypanosoma cruzi (strain CL Brener)</name>
    <dbReference type="NCBI Taxonomy" id="353153"/>
    <lineage>
        <taxon>Eukaryota</taxon>
        <taxon>Discoba</taxon>
        <taxon>Euglenozoa</taxon>
        <taxon>Kinetoplastea</taxon>
        <taxon>Metakinetoplastina</taxon>
        <taxon>Trypanosomatida</taxon>
        <taxon>Trypanosomatidae</taxon>
        <taxon>Trypanosoma</taxon>
        <taxon>Schizotrypanum</taxon>
    </lineage>
</organism>
<evidence type="ECO:0000255" key="1">
    <source>
        <dbReference type="HAMAP-Rule" id="MF_03119"/>
    </source>
</evidence>
<keyword id="KW-0028">Amino-acid biosynthesis</keyword>
<keyword id="KW-0963">Cytoplasm</keyword>
<keyword id="KW-0413">Isomerase</keyword>
<keyword id="KW-0486">Methionine biosynthesis</keyword>
<keyword id="KW-0539">Nucleus</keyword>
<keyword id="KW-1185">Reference proteome</keyword>